<proteinExistence type="inferred from homology"/>
<reference key="1">
    <citation type="journal article" date="2002" name="Nature">
        <title>Genome sequence of the plant pathogen Ralstonia solanacearum.</title>
        <authorList>
            <person name="Salanoubat M."/>
            <person name="Genin S."/>
            <person name="Artiguenave F."/>
            <person name="Gouzy J."/>
            <person name="Mangenot S."/>
            <person name="Arlat M."/>
            <person name="Billault A."/>
            <person name="Brottier P."/>
            <person name="Camus J.-C."/>
            <person name="Cattolico L."/>
            <person name="Chandler M."/>
            <person name="Choisne N."/>
            <person name="Claudel-Renard C."/>
            <person name="Cunnac S."/>
            <person name="Demange N."/>
            <person name="Gaspin C."/>
            <person name="Lavie M."/>
            <person name="Moisan A."/>
            <person name="Robert C."/>
            <person name="Saurin W."/>
            <person name="Schiex T."/>
            <person name="Siguier P."/>
            <person name="Thebault P."/>
            <person name="Whalen M."/>
            <person name="Wincker P."/>
            <person name="Levy M."/>
            <person name="Weissenbach J."/>
            <person name="Boucher C.A."/>
        </authorList>
    </citation>
    <scope>NUCLEOTIDE SEQUENCE [LARGE SCALE GENOMIC DNA]</scope>
    <source>
        <strain>ATCC BAA-1114 / GMI1000</strain>
    </source>
</reference>
<comment type="function">
    <text evidence="1">DNA polymerase involved in damage-induced mutagenesis and translesion synthesis (TLS). It is not the major replicative DNA polymerase.</text>
</comment>
<comment type="catalytic activity">
    <reaction evidence="1">
        <text>DNA(n) + a 2'-deoxyribonucleoside 5'-triphosphate = DNA(n+1) + diphosphate</text>
        <dbReference type="Rhea" id="RHEA:22508"/>
        <dbReference type="Rhea" id="RHEA-COMP:17339"/>
        <dbReference type="Rhea" id="RHEA-COMP:17340"/>
        <dbReference type="ChEBI" id="CHEBI:33019"/>
        <dbReference type="ChEBI" id="CHEBI:61560"/>
        <dbReference type="ChEBI" id="CHEBI:173112"/>
        <dbReference type="EC" id="2.7.7.7"/>
    </reaction>
</comment>
<comment type="subcellular location">
    <subcellularLocation>
        <location evidence="1">Cytoplasm</location>
    </subcellularLocation>
</comment>
<comment type="similarity">
    <text evidence="1">Belongs to the DNA polymerase type-C family. DnaE2 subfamily.</text>
</comment>
<gene>
    <name evidence="1" type="primary">dnaE2</name>
    <name type="ordered locus">RSp0800</name>
    <name type="ORF">RS01907</name>
</gene>
<protein>
    <recommendedName>
        <fullName evidence="1">Error-prone DNA polymerase</fullName>
        <ecNumber evidence="1">2.7.7.7</ecNumber>
    </recommendedName>
</protein>
<geneLocation type="plasmid">
    <name>megaplasmid Rsp</name>
</geneLocation>
<feature type="chain" id="PRO_0000103393" description="Error-prone DNA polymerase">
    <location>
        <begin position="1"/>
        <end position="1075"/>
    </location>
</feature>
<keyword id="KW-0963">Cytoplasm</keyword>
<keyword id="KW-0227">DNA damage</keyword>
<keyword id="KW-0234">DNA repair</keyword>
<keyword id="KW-0235">DNA replication</keyword>
<keyword id="KW-0239">DNA-directed DNA polymerase</keyword>
<keyword id="KW-0548">Nucleotidyltransferase</keyword>
<keyword id="KW-0614">Plasmid</keyword>
<keyword id="KW-1185">Reference proteome</keyword>
<keyword id="KW-0808">Transferase</keyword>
<accession>Q8XRN1</accession>
<name>DNAE2_RALN1</name>
<evidence type="ECO:0000255" key="1">
    <source>
        <dbReference type="HAMAP-Rule" id="MF_01902"/>
    </source>
</evidence>
<dbReference type="EC" id="2.7.7.7" evidence="1"/>
<dbReference type="EMBL" id="AL646053">
    <property type="protein sequence ID" value="CAD17951.1"/>
    <property type="molecule type" value="Genomic_DNA"/>
</dbReference>
<dbReference type="RefSeq" id="WP_011004098.1">
    <property type="nucleotide sequence ID" value="NC_003296.1"/>
</dbReference>
<dbReference type="SMR" id="Q8XRN1"/>
<dbReference type="STRING" id="267608.RSp0800"/>
<dbReference type="EnsemblBacteria" id="CAD17951">
    <property type="protein sequence ID" value="CAD17951"/>
    <property type="gene ID" value="RSp0800"/>
</dbReference>
<dbReference type="KEGG" id="rso:RSp0800"/>
<dbReference type="PATRIC" id="fig|267608.8.peg.4267"/>
<dbReference type="eggNOG" id="COG0587">
    <property type="taxonomic scope" value="Bacteria"/>
</dbReference>
<dbReference type="HOGENOM" id="CLU_001600_4_0_4"/>
<dbReference type="Proteomes" id="UP000001436">
    <property type="component" value="Plasmid megaplasmid Rsp"/>
</dbReference>
<dbReference type="GO" id="GO:0005737">
    <property type="term" value="C:cytoplasm"/>
    <property type="evidence" value="ECO:0007669"/>
    <property type="project" value="UniProtKB-SubCell"/>
</dbReference>
<dbReference type="GO" id="GO:0008408">
    <property type="term" value="F:3'-5' exonuclease activity"/>
    <property type="evidence" value="ECO:0007669"/>
    <property type="project" value="InterPro"/>
</dbReference>
<dbReference type="GO" id="GO:0003887">
    <property type="term" value="F:DNA-directed DNA polymerase activity"/>
    <property type="evidence" value="ECO:0007669"/>
    <property type="project" value="UniProtKB-UniRule"/>
</dbReference>
<dbReference type="GO" id="GO:0003676">
    <property type="term" value="F:nucleic acid binding"/>
    <property type="evidence" value="ECO:0007669"/>
    <property type="project" value="InterPro"/>
</dbReference>
<dbReference type="GO" id="GO:0006281">
    <property type="term" value="P:DNA repair"/>
    <property type="evidence" value="ECO:0007669"/>
    <property type="project" value="UniProtKB-UniRule"/>
</dbReference>
<dbReference type="GO" id="GO:0006260">
    <property type="term" value="P:DNA replication"/>
    <property type="evidence" value="ECO:0007669"/>
    <property type="project" value="UniProtKB-KW"/>
</dbReference>
<dbReference type="CDD" id="cd04485">
    <property type="entry name" value="DnaE_OBF"/>
    <property type="match status" value="1"/>
</dbReference>
<dbReference type="CDD" id="cd07434">
    <property type="entry name" value="PHP_PolIIIA_DnaE2"/>
    <property type="match status" value="1"/>
</dbReference>
<dbReference type="Gene3D" id="1.10.150.870">
    <property type="match status" value="1"/>
</dbReference>
<dbReference type="Gene3D" id="3.20.20.140">
    <property type="entry name" value="Metal-dependent hydrolases"/>
    <property type="match status" value="1"/>
</dbReference>
<dbReference type="HAMAP" id="MF_01902">
    <property type="entry name" value="DNApol_error_prone"/>
    <property type="match status" value="1"/>
</dbReference>
<dbReference type="InterPro" id="IPR011708">
    <property type="entry name" value="DNA_pol3_alpha_NTPase_dom"/>
</dbReference>
<dbReference type="InterPro" id="IPR040982">
    <property type="entry name" value="DNA_pol3_finger"/>
</dbReference>
<dbReference type="InterPro" id="IPR023073">
    <property type="entry name" value="DnaE2"/>
</dbReference>
<dbReference type="InterPro" id="IPR004805">
    <property type="entry name" value="DnaE2/DnaE/PolC"/>
</dbReference>
<dbReference type="InterPro" id="IPR029460">
    <property type="entry name" value="DNAPol_HHH"/>
</dbReference>
<dbReference type="InterPro" id="IPR004365">
    <property type="entry name" value="NA-bd_OB_tRNA"/>
</dbReference>
<dbReference type="InterPro" id="IPR004013">
    <property type="entry name" value="PHP_dom"/>
</dbReference>
<dbReference type="InterPro" id="IPR003141">
    <property type="entry name" value="Pol/His_phosphatase_N"/>
</dbReference>
<dbReference type="InterPro" id="IPR016195">
    <property type="entry name" value="Pol/histidinol_Pase-like"/>
</dbReference>
<dbReference type="NCBIfam" id="TIGR00594">
    <property type="entry name" value="polc"/>
    <property type="match status" value="1"/>
</dbReference>
<dbReference type="NCBIfam" id="NF004225">
    <property type="entry name" value="PRK05672.1"/>
    <property type="match status" value="1"/>
</dbReference>
<dbReference type="PANTHER" id="PTHR32294">
    <property type="entry name" value="DNA POLYMERASE III SUBUNIT ALPHA"/>
    <property type="match status" value="1"/>
</dbReference>
<dbReference type="PANTHER" id="PTHR32294:SF4">
    <property type="entry name" value="ERROR-PRONE DNA POLYMERASE"/>
    <property type="match status" value="1"/>
</dbReference>
<dbReference type="Pfam" id="PF07733">
    <property type="entry name" value="DNA_pol3_alpha"/>
    <property type="match status" value="1"/>
</dbReference>
<dbReference type="Pfam" id="PF17657">
    <property type="entry name" value="DNA_pol3_finger"/>
    <property type="match status" value="1"/>
</dbReference>
<dbReference type="Pfam" id="PF14579">
    <property type="entry name" value="HHH_6"/>
    <property type="match status" value="1"/>
</dbReference>
<dbReference type="Pfam" id="PF02811">
    <property type="entry name" value="PHP"/>
    <property type="match status" value="1"/>
</dbReference>
<dbReference type="Pfam" id="PF01336">
    <property type="entry name" value="tRNA_anti-codon"/>
    <property type="match status" value="1"/>
</dbReference>
<dbReference type="SMART" id="SM00481">
    <property type="entry name" value="POLIIIAc"/>
    <property type="match status" value="1"/>
</dbReference>
<dbReference type="SUPFAM" id="SSF89550">
    <property type="entry name" value="PHP domain-like"/>
    <property type="match status" value="1"/>
</dbReference>
<sequence length="1075" mass="119253">MNAPTPLPIGLPDYAELHCISNFTFLTGASHPHELVARAQAFGYRALALTDECSVAGTVRAHMAAKEAGLKLIIGSRFTVRDAQGEPWLRLVLLAQDIDGYGNLCECITQARLAAPKGDYRLLADDLAAPAGELAHLRGMPHCLAILLPDYDPDPRHLLAQAQWCRQVFGDRLSMALELPLRHADDRHRGTVAAVSEQTDVPMVATGDVAMHSRQRKPLHDVLTAIRLSRPIAECGLALAPSAEQAMRTRMQLAFFYQGERGAQVLRRSVELASLCDFSLDEIAYEYPHEVVPEGQTPAGYLLAEVMAGAARRYGKDIPSKVRAQLDEELALIAELRYEPFFLTVYDVVRFARSQSILCQGRGSAANSAVCYCLGITEVNPESGNTLFARFLSRARNEPPDIDVDFEHQRREEVIQYIYKKYGVTRTALAAALITYRTRSALRDVGRALGIDLGVIEQVAKAQAWWDGRHEFAQRAGQQGLDPESPLVQRWAGLIEQLRGFPRHLSQHVGGFVIAQGKLSRLVPIENAAMPERRVIQWDKDDLESLRLLKVDVLALGMLTAIRRTLDMLDALPGRRAHYGAPDKLAMQHLPDEDTATYEMICRAETIGVFQIESRAQQSMLPRLRPRTYYDLVIQVAIVRPGPIQGGMVHPYLQRREAVRNGNPDCVTYPGPEVKAVLERTLGVPIFQEQVMEIAMKAGGFTADEADRLRRDMAAWKRKGNLTQHQARLMKEMVEVRHYDPAFVEALCRQMEGFAEYGFPESHAAGFARLAYVSSFLKCHEPAAFFAALLNSQPMGFYSPSQLVQEARRSRVRVLPADVTASAWDSTLHARPDGAGGQPDIRLGLNRIRGMRPAAGERIVVARAQAPFSSVEDLAHRAALDRHDLSVLAAANALLSLAGHRRQALWQTLALQEPGQDHALLRQARPVEAPLVLPAPSLGEEVVADYGSLGLSLQSHPLSLLRPRLERMRFVTAAALAGYRNGQLARACGIVTVRQRPGTAKGTIFVSIEDETGAVNVVLWPRLIERQRREVLHARLLGVYGKWQCERETRHLVAQHLVDLTPLLGRLASSSRDFH</sequence>
<organism>
    <name type="scientific">Ralstonia nicotianae (strain ATCC BAA-1114 / GMI1000)</name>
    <name type="common">Ralstonia solanacearum</name>
    <dbReference type="NCBI Taxonomy" id="267608"/>
    <lineage>
        <taxon>Bacteria</taxon>
        <taxon>Pseudomonadati</taxon>
        <taxon>Pseudomonadota</taxon>
        <taxon>Betaproteobacteria</taxon>
        <taxon>Burkholderiales</taxon>
        <taxon>Burkholderiaceae</taxon>
        <taxon>Ralstonia</taxon>
        <taxon>Ralstonia solanacearum species complex</taxon>
    </lineage>
</organism>